<sequence>MNFETVIGLEVHVELNTNSKIFSPTSAHFGNEQNTNTNVIDWSFPGVLPVLNKGVVDAGIKAALALNMDIHQHMHFDRKNYFYPDNPKAYQISQFDEPIGYNGWIEVQLEDGTTKKIGIERAHLEEDAGKNTHGTDGFSYVDLNRQGVPLIEIVSEADMRSPEEAYAYLTALKEVIQYTGISDVKMEEGSMRVDANISLRPYGQEEFGTKTELKNLNSFSNVRKGLEYEVQRQAKILRSGGVIRQETRRYDEASKSTILMRVKEGAADYRYFPEPDLPLFEISDEWIEEMRTELPEFPKDRRARYVAELGLSDYDANQLTATKVTSDFFEAAVALGGDAKQVSNWLQGEVAQFLNAEGKTLEEIQLTPENLVEMIAIIEDGTISSKIAKKVFVHLAKNGGGAREYVEKAGLVQISDPEVLIPIIHQVFADNEAAVADFKSGKRNADKAFTGFLMKATKGQANPQVALKLLAQELAKLKED</sequence>
<protein>
    <recommendedName>
        <fullName evidence="1">Aspartyl/glutamyl-tRNA(Asn/Gln) amidotransferase subunit B</fullName>
        <shortName evidence="1">Asp/Glu-ADT subunit B</shortName>
        <ecNumber evidence="1">6.3.5.-</ecNumber>
    </recommendedName>
</protein>
<organism>
    <name type="scientific">Streptococcus thermophilus (strain ATCC BAA-250 / LMG 18311)</name>
    <dbReference type="NCBI Taxonomy" id="264199"/>
    <lineage>
        <taxon>Bacteria</taxon>
        <taxon>Bacillati</taxon>
        <taxon>Bacillota</taxon>
        <taxon>Bacilli</taxon>
        <taxon>Lactobacillales</taxon>
        <taxon>Streptococcaceae</taxon>
        <taxon>Streptococcus</taxon>
    </lineage>
</organism>
<feature type="chain" id="PRO_0000241282" description="Aspartyl/glutamyl-tRNA(Asn/Gln) amidotransferase subunit B">
    <location>
        <begin position="1"/>
        <end position="480"/>
    </location>
</feature>
<proteinExistence type="inferred from homology"/>
<name>GATB_STRT2</name>
<dbReference type="EC" id="6.3.5.-" evidence="1"/>
<dbReference type="EMBL" id="CP000023">
    <property type="protein sequence ID" value="AAV61228.1"/>
    <property type="molecule type" value="Genomic_DNA"/>
</dbReference>
<dbReference type="RefSeq" id="WP_002946582.1">
    <property type="nucleotide sequence ID" value="NC_006448.1"/>
</dbReference>
<dbReference type="SMR" id="Q5M313"/>
<dbReference type="STRING" id="264199.stu1625"/>
<dbReference type="GeneID" id="66899372"/>
<dbReference type="KEGG" id="stl:stu1625"/>
<dbReference type="eggNOG" id="COG0064">
    <property type="taxonomic scope" value="Bacteria"/>
</dbReference>
<dbReference type="HOGENOM" id="CLU_019240_0_0_9"/>
<dbReference type="Proteomes" id="UP000001170">
    <property type="component" value="Chromosome"/>
</dbReference>
<dbReference type="GO" id="GO:0050566">
    <property type="term" value="F:asparaginyl-tRNA synthase (glutamine-hydrolyzing) activity"/>
    <property type="evidence" value="ECO:0007669"/>
    <property type="project" value="RHEA"/>
</dbReference>
<dbReference type="GO" id="GO:0005524">
    <property type="term" value="F:ATP binding"/>
    <property type="evidence" value="ECO:0007669"/>
    <property type="project" value="UniProtKB-KW"/>
</dbReference>
<dbReference type="GO" id="GO:0050567">
    <property type="term" value="F:glutaminyl-tRNA synthase (glutamine-hydrolyzing) activity"/>
    <property type="evidence" value="ECO:0007669"/>
    <property type="project" value="UniProtKB-UniRule"/>
</dbReference>
<dbReference type="GO" id="GO:0070681">
    <property type="term" value="P:glutaminyl-tRNAGln biosynthesis via transamidation"/>
    <property type="evidence" value="ECO:0007669"/>
    <property type="project" value="TreeGrafter"/>
</dbReference>
<dbReference type="GO" id="GO:0006412">
    <property type="term" value="P:translation"/>
    <property type="evidence" value="ECO:0007669"/>
    <property type="project" value="UniProtKB-UniRule"/>
</dbReference>
<dbReference type="FunFam" id="1.10.10.410:FF:000001">
    <property type="entry name" value="Aspartyl/glutamyl-tRNA(Asn/Gln) amidotransferase subunit B"/>
    <property type="match status" value="1"/>
</dbReference>
<dbReference type="FunFam" id="1.10.150.380:FF:000001">
    <property type="entry name" value="Aspartyl/glutamyl-tRNA(Asn/Gln) amidotransferase subunit B"/>
    <property type="match status" value="1"/>
</dbReference>
<dbReference type="Gene3D" id="1.10.10.410">
    <property type="match status" value="1"/>
</dbReference>
<dbReference type="Gene3D" id="1.10.150.380">
    <property type="entry name" value="GatB domain, N-terminal subdomain"/>
    <property type="match status" value="1"/>
</dbReference>
<dbReference type="HAMAP" id="MF_00121">
    <property type="entry name" value="GatB"/>
    <property type="match status" value="1"/>
</dbReference>
<dbReference type="InterPro" id="IPR017959">
    <property type="entry name" value="Asn/Gln-tRNA_amidoTrfase_suB/E"/>
</dbReference>
<dbReference type="InterPro" id="IPR006075">
    <property type="entry name" value="Asn/Gln-tRNA_Trfase_suB/E_cat"/>
</dbReference>
<dbReference type="InterPro" id="IPR018027">
    <property type="entry name" value="Asn/Gln_amidotransferase"/>
</dbReference>
<dbReference type="InterPro" id="IPR003789">
    <property type="entry name" value="Asn/Gln_tRNA_amidoTrase-B-like"/>
</dbReference>
<dbReference type="InterPro" id="IPR004413">
    <property type="entry name" value="GatB"/>
</dbReference>
<dbReference type="InterPro" id="IPR042114">
    <property type="entry name" value="GatB_C_1"/>
</dbReference>
<dbReference type="InterPro" id="IPR023168">
    <property type="entry name" value="GatB_Yqey_C_2"/>
</dbReference>
<dbReference type="InterPro" id="IPR017958">
    <property type="entry name" value="Gln-tRNA_amidoTrfase_suB_CS"/>
</dbReference>
<dbReference type="InterPro" id="IPR014746">
    <property type="entry name" value="Gln_synth/guanido_kin_cat_dom"/>
</dbReference>
<dbReference type="NCBIfam" id="TIGR00133">
    <property type="entry name" value="gatB"/>
    <property type="match status" value="1"/>
</dbReference>
<dbReference type="NCBIfam" id="NF004011">
    <property type="entry name" value="PRK05477.1-1"/>
    <property type="match status" value="1"/>
</dbReference>
<dbReference type="NCBIfam" id="NF004012">
    <property type="entry name" value="PRK05477.1-2"/>
    <property type="match status" value="1"/>
</dbReference>
<dbReference type="NCBIfam" id="NF004014">
    <property type="entry name" value="PRK05477.1-4"/>
    <property type="match status" value="1"/>
</dbReference>
<dbReference type="PANTHER" id="PTHR11659">
    <property type="entry name" value="GLUTAMYL-TRNA GLN AMIDOTRANSFERASE SUBUNIT B MITOCHONDRIAL AND PROKARYOTIC PET112-RELATED"/>
    <property type="match status" value="1"/>
</dbReference>
<dbReference type="PANTHER" id="PTHR11659:SF0">
    <property type="entry name" value="GLUTAMYL-TRNA(GLN) AMIDOTRANSFERASE SUBUNIT B, MITOCHONDRIAL"/>
    <property type="match status" value="1"/>
</dbReference>
<dbReference type="Pfam" id="PF02934">
    <property type="entry name" value="GatB_N"/>
    <property type="match status" value="1"/>
</dbReference>
<dbReference type="Pfam" id="PF02637">
    <property type="entry name" value="GatB_Yqey"/>
    <property type="match status" value="1"/>
</dbReference>
<dbReference type="SMART" id="SM00845">
    <property type="entry name" value="GatB_Yqey"/>
    <property type="match status" value="1"/>
</dbReference>
<dbReference type="SUPFAM" id="SSF89095">
    <property type="entry name" value="GatB/YqeY motif"/>
    <property type="match status" value="1"/>
</dbReference>
<dbReference type="SUPFAM" id="SSF55931">
    <property type="entry name" value="Glutamine synthetase/guanido kinase"/>
    <property type="match status" value="1"/>
</dbReference>
<dbReference type="PROSITE" id="PS01234">
    <property type="entry name" value="GATB"/>
    <property type="match status" value="1"/>
</dbReference>
<comment type="function">
    <text evidence="1">Allows the formation of correctly charged Asn-tRNA(Asn) or Gln-tRNA(Gln) through the transamidation of misacylated Asp-tRNA(Asn) or Glu-tRNA(Gln) in organisms which lack either or both of asparaginyl-tRNA or glutaminyl-tRNA synthetases. The reaction takes place in the presence of glutamine and ATP through an activated phospho-Asp-tRNA(Asn) or phospho-Glu-tRNA(Gln).</text>
</comment>
<comment type="catalytic activity">
    <reaction evidence="1">
        <text>L-glutamyl-tRNA(Gln) + L-glutamine + ATP + H2O = L-glutaminyl-tRNA(Gln) + L-glutamate + ADP + phosphate + H(+)</text>
        <dbReference type="Rhea" id="RHEA:17521"/>
        <dbReference type="Rhea" id="RHEA-COMP:9681"/>
        <dbReference type="Rhea" id="RHEA-COMP:9684"/>
        <dbReference type="ChEBI" id="CHEBI:15377"/>
        <dbReference type="ChEBI" id="CHEBI:15378"/>
        <dbReference type="ChEBI" id="CHEBI:29985"/>
        <dbReference type="ChEBI" id="CHEBI:30616"/>
        <dbReference type="ChEBI" id="CHEBI:43474"/>
        <dbReference type="ChEBI" id="CHEBI:58359"/>
        <dbReference type="ChEBI" id="CHEBI:78520"/>
        <dbReference type="ChEBI" id="CHEBI:78521"/>
        <dbReference type="ChEBI" id="CHEBI:456216"/>
    </reaction>
</comment>
<comment type="catalytic activity">
    <reaction evidence="1">
        <text>L-aspartyl-tRNA(Asn) + L-glutamine + ATP + H2O = L-asparaginyl-tRNA(Asn) + L-glutamate + ADP + phosphate + 2 H(+)</text>
        <dbReference type="Rhea" id="RHEA:14513"/>
        <dbReference type="Rhea" id="RHEA-COMP:9674"/>
        <dbReference type="Rhea" id="RHEA-COMP:9677"/>
        <dbReference type="ChEBI" id="CHEBI:15377"/>
        <dbReference type="ChEBI" id="CHEBI:15378"/>
        <dbReference type="ChEBI" id="CHEBI:29985"/>
        <dbReference type="ChEBI" id="CHEBI:30616"/>
        <dbReference type="ChEBI" id="CHEBI:43474"/>
        <dbReference type="ChEBI" id="CHEBI:58359"/>
        <dbReference type="ChEBI" id="CHEBI:78515"/>
        <dbReference type="ChEBI" id="CHEBI:78516"/>
        <dbReference type="ChEBI" id="CHEBI:456216"/>
    </reaction>
</comment>
<comment type="subunit">
    <text evidence="1">Heterotrimer of A, B and C subunits.</text>
</comment>
<comment type="similarity">
    <text evidence="1">Belongs to the GatB/GatE family. GatB subfamily.</text>
</comment>
<evidence type="ECO:0000255" key="1">
    <source>
        <dbReference type="HAMAP-Rule" id="MF_00121"/>
    </source>
</evidence>
<accession>Q5M313</accession>
<gene>
    <name evidence="1" type="primary">gatB</name>
    <name type="ordered locus">stu1625</name>
</gene>
<reference key="1">
    <citation type="journal article" date="2004" name="Nat. Biotechnol.">
        <title>Complete sequence and comparative genome analysis of the dairy bacterium Streptococcus thermophilus.</title>
        <authorList>
            <person name="Bolotin A."/>
            <person name="Quinquis B."/>
            <person name="Renault P."/>
            <person name="Sorokin A."/>
            <person name="Ehrlich S.D."/>
            <person name="Kulakauskas S."/>
            <person name="Lapidus A."/>
            <person name="Goltsman E."/>
            <person name="Mazur M."/>
            <person name="Pusch G.D."/>
            <person name="Fonstein M."/>
            <person name="Overbeek R."/>
            <person name="Kyprides N."/>
            <person name="Purnelle B."/>
            <person name="Prozzi D."/>
            <person name="Ngui K."/>
            <person name="Masuy D."/>
            <person name="Hancy F."/>
            <person name="Burteau S."/>
            <person name="Boutry M."/>
            <person name="Delcour J."/>
            <person name="Goffeau A."/>
            <person name="Hols P."/>
        </authorList>
    </citation>
    <scope>NUCLEOTIDE SEQUENCE [LARGE SCALE GENOMIC DNA]</scope>
    <source>
        <strain>ATCC BAA-250 / LMG 18311</strain>
    </source>
</reference>
<keyword id="KW-0067">ATP-binding</keyword>
<keyword id="KW-0436">Ligase</keyword>
<keyword id="KW-0547">Nucleotide-binding</keyword>
<keyword id="KW-0648">Protein biosynthesis</keyword>
<keyword id="KW-1185">Reference proteome</keyword>